<comment type="function">
    <text evidence="1">May play a role in DNA repair. It seems to be involved in an RecBC-independent recombinational process of DNA repair. It may act with RecF and RecO.</text>
</comment>
<comment type="similarity">
    <text evidence="1">Belongs to the RecR family.</text>
</comment>
<evidence type="ECO:0000255" key="1">
    <source>
        <dbReference type="HAMAP-Rule" id="MF_00017"/>
    </source>
</evidence>
<proteinExistence type="inferred from homology"/>
<sequence length="201" mass="21963">MQTSPLLTQLMEALRCLPGVGPKSAQRMAFTLLQRDRSGGMRLAQALTRAMSEIGHCADCRTFTEQEVCNICSNPRRQENGQICVVESPADIYAIEQTGQFSGRYFVLMGHLSPLDGIGPDDIGLDRLEQRLAEEKITEVILATNPTVEGEATANYIAELCAQYDVEASRIAHGVPVGGELEMVDGTTLSHSLAGRHKIRF</sequence>
<dbReference type="EMBL" id="CP000948">
    <property type="protein sequence ID" value="ACB01599.1"/>
    <property type="molecule type" value="Genomic_DNA"/>
</dbReference>
<dbReference type="RefSeq" id="WP_001195025.1">
    <property type="nucleotide sequence ID" value="NC_010473.1"/>
</dbReference>
<dbReference type="SMR" id="B1XFQ9"/>
<dbReference type="GeneID" id="93776978"/>
<dbReference type="KEGG" id="ecd:ECDH10B_0428"/>
<dbReference type="HOGENOM" id="CLU_060739_1_2_6"/>
<dbReference type="GO" id="GO:0003677">
    <property type="term" value="F:DNA binding"/>
    <property type="evidence" value="ECO:0007669"/>
    <property type="project" value="UniProtKB-UniRule"/>
</dbReference>
<dbReference type="GO" id="GO:0008270">
    <property type="term" value="F:zinc ion binding"/>
    <property type="evidence" value="ECO:0007669"/>
    <property type="project" value="UniProtKB-KW"/>
</dbReference>
<dbReference type="GO" id="GO:0006310">
    <property type="term" value="P:DNA recombination"/>
    <property type="evidence" value="ECO:0007669"/>
    <property type="project" value="UniProtKB-UniRule"/>
</dbReference>
<dbReference type="GO" id="GO:0006281">
    <property type="term" value="P:DNA repair"/>
    <property type="evidence" value="ECO:0007669"/>
    <property type="project" value="UniProtKB-UniRule"/>
</dbReference>
<dbReference type="CDD" id="cd01025">
    <property type="entry name" value="TOPRIM_recR"/>
    <property type="match status" value="1"/>
</dbReference>
<dbReference type="FunFam" id="1.10.8.420:FF:000001">
    <property type="entry name" value="Recombination protein RecR"/>
    <property type="match status" value="1"/>
</dbReference>
<dbReference type="FunFam" id="3.40.1360.10:FF:000001">
    <property type="entry name" value="Recombination protein RecR"/>
    <property type="match status" value="1"/>
</dbReference>
<dbReference type="Gene3D" id="3.40.1360.10">
    <property type="match status" value="1"/>
</dbReference>
<dbReference type="Gene3D" id="6.10.250.240">
    <property type="match status" value="1"/>
</dbReference>
<dbReference type="Gene3D" id="1.10.8.420">
    <property type="entry name" value="RecR Domain 1"/>
    <property type="match status" value="1"/>
</dbReference>
<dbReference type="HAMAP" id="MF_00017">
    <property type="entry name" value="RecR"/>
    <property type="match status" value="1"/>
</dbReference>
<dbReference type="InterPro" id="IPR000093">
    <property type="entry name" value="DNA_Rcmb_RecR"/>
</dbReference>
<dbReference type="InterPro" id="IPR023627">
    <property type="entry name" value="Rcmb_RecR"/>
</dbReference>
<dbReference type="InterPro" id="IPR015967">
    <property type="entry name" value="Rcmb_RecR_Znf"/>
</dbReference>
<dbReference type="InterPro" id="IPR006171">
    <property type="entry name" value="TOPRIM_dom"/>
</dbReference>
<dbReference type="InterPro" id="IPR034137">
    <property type="entry name" value="TOPRIM_RecR"/>
</dbReference>
<dbReference type="NCBIfam" id="TIGR00615">
    <property type="entry name" value="recR"/>
    <property type="match status" value="1"/>
</dbReference>
<dbReference type="PANTHER" id="PTHR30446">
    <property type="entry name" value="RECOMBINATION PROTEIN RECR"/>
    <property type="match status" value="1"/>
</dbReference>
<dbReference type="PANTHER" id="PTHR30446:SF0">
    <property type="entry name" value="RECOMBINATION PROTEIN RECR"/>
    <property type="match status" value="1"/>
</dbReference>
<dbReference type="Pfam" id="PF21175">
    <property type="entry name" value="RecR_C"/>
    <property type="match status" value="1"/>
</dbReference>
<dbReference type="Pfam" id="PF21176">
    <property type="entry name" value="RecR_HhH"/>
    <property type="match status" value="1"/>
</dbReference>
<dbReference type="Pfam" id="PF02132">
    <property type="entry name" value="RecR_ZnF"/>
    <property type="match status" value="1"/>
</dbReference>
<dbReference type="Pfam" id="PF13662">
    <property type="entry name" value="Toprim_4"/>
    <property type="match status" value="1"/>
</dbReference>
<dbReference type="SMART" id="SM00493">
    <property type="entry name" value="TOPRIM"/>
    <property type="match status" value="1"/>
</dbReference>
<dbReference type="SUPFAM" id="SSF111304">
    <property type="entry name" value="Recombination protein RecR"/>
    <property type="match status" value="1"/>
</dbReference>
<dbReference type="PROSITE" id="PS01300">
    <property type="entry name" value="RECR"/>
    <property type="match status" value="1"/>
</dbReference>
<dbReference type="PROSITE" id="PS50880">
    <property type="entry name" value="TOPRIM"/>
    <property type="match status" value="1"/>
</dbReference>
<keyword id="KW-0227">DNA damage</keyword>
<keyword id="KW-0233">DNA recombination</keyword>
<keyword id="KW-0234">DNA repair</keyword>
<keyword id="KW-0479">Metal-binding</keyword>
<keyword id="KW-0862">Zinc</keyword>
<keyword id="KW-0863">Zinc-finger</keyword>
<gene>
    <name evidence="1" type="primary">recR</name>
    <name type="ordered locus">ECDH10B_0428</name>
</gene>
<reference key="1">
    <citation type="journal article" date="2008" name="J. Bacteriol.">
        <title>The complete genome sequence of Escherichia coli DH10B: insights into the biology of a laboratory workhorse.</title>
        <authorList>
            <person name="Durfee T."/>
            <person name="Nelson R."/>
            <person name="Baldwin S."/>
            <person name="Plunkett G. III"/>
            <person name="Burland V."/>
            <person name="Mau B."/>
            <person name="Petrosino J.F."/>
            <person name="Qin X."/>
            <person name="Muzny D.M."/>
            <person name="Ayele M."/>
            <person name="Gibbs R.A."/>
            <person name="Csorgo B."/>
            <person name="Posfai G."/>
            <person name="Weinstock G.M."/>
            <person name="Blattner F.R."/>
        </authorList>
    </citation>
    <scope>NUCLEOTIDE SEQUENCE [LARGE SCALE GENOMIC DNA]</scope>
    <source>
        <strain>K12 / DH10B</strain>
    </source>
</reference>
<accession>B1XFQ9</accession>
<protein>
    <recommendedName>
        <fullName evidence="1">Recombination protein RecR</fullName>
    </recommendedName>
</protein>
<organism>
    <name type="scientific">Escherichia coli (strain K12 / DH10B)</name>
    <dbReference type="NCBI Taxonomy" id="316385"/>
    <lineage>
        <taxon>Bacteria</taxon>
        <taxon>Pseudomonadati</taxon>
        <taxon>Pseudomonadota</taxon>
        <taxon>Gammaproteobacteria</taxon>
        <taxon>Enterobacterales</taxon>
        <taxon>Enterobacteriaceae</taxon>
        <taxon>Escherichia</taxon>
    </lineage>
</organism>
<feature type="chain" id="PRO_1000089726" description="Recombination protein RecR">
    <location>
        <begin position="1"/>
        <end position="201"/>
    </location>
</feature>
<feature type="domain" description="Toprim" evidence="1">
    <location>
        <begin position="81"/>
        <end position="176"/>
    </location>
</feature>
<feature type="zinc finger region" description="C4-type" evidence="1">
    <location>
        <begin position="57"/>
        <end position="72"/>
    </location>
</feature>
<name>RECR_ECODH</name>